<accession>B2SMK4</accession>
<organism>
    <name type="scientific">Xanthomonas oryzae pv. oryzae (strain PXO99A)</name>
    <dbReference type="NCBI Taxonomy" id="360094"/>
    <lineage>
        <taxon>Bacteria</taxon>
        <taxon>Pseudomonadati</taxon>
        <taxon>Pseudomonadota</taxon>
        <taxon>Gammaproteobacteria</taxon>
        <taxon>Lysobacterales</taxon>
        <taxon>Lysobacteraceae</taxon>
        <taxon>Xanthomonas</taxon>
    </lineage>
</organism>
<sequence length="247" mass="26954">MTTLFISDLHLDPARPAITELFLDFLRTQVRGSDALYILGDLFEAWIGDDTPSTAADAVAVALHAVADAGVPVFFMAGNRDFLVGETYAQRAGFRILPDPTVIDLYGHTTLLMHGDLLCTDDTAYQAFRAQTRDPVFQAQFLAQPLAARVAFAQQARAASQARHAELKQGDQSNVETVTDVSPAEVEATFVRYGLDRLIHGHTHRPAIHTVQAGGNTCTRIVLGDWYEQGSVLRLDADGVSLEQFAL</sequence>
<feature type="chain" id="PRO_1000129544" description="UDP-2,3-diacylglucosamine hydrolase">
    <location>
        <begin position="1"/>
        <end position="247"/>
    </location>
</feature>
<feature type="binding site" evidence="1">
    <location>
        <position position="8"/>
    </location>
    <ligand>
        <name>Mn(2+)</name>
        <dbReference type="ChEBI" id="CHEBI:29035"/>
        <label>1</label>
    </ligand>
</feature>
<feature type="binding site" evidence="1">
    <location>
        <position position="10"/>
    </location>
    <ligand>
        <name>Mn(2+)</name>
        <dbReference type="ChEBI" id="CHEBI:29035"/>
        <label>1</label>
    </ligand>
</feature>
<feature type="binding site" evidence="1">
    <location>
        <position position="41"/>
    </location>
    <ligand>
        <name>Mn(2+)</name>
        <dbReference type="ChEBI" id="CHEBI:29035"/>
        <label>1</label>
    </ligand>
</feature>
<feature type="binding site" evidence="1">
    <location>
        <position position="41"/>
    </location>
    <ligand>
        <name>Mn(2+)</name>
        <dbReference type="ChEBI" id="CHEBI:29035"/>
        <label>2</label>
    </ligand>
</feature>
<feature type="binding site" evidence="1">
    <location>
        <begin position="79"/>
        <end position="80"/>
    </location>
    <ligand>
        <name>substrate</name>
    </ligand>
</feature>
<feature type="binding site" evidence="1">
    <location>
        <position position="79"/>
    </location>
    <ligand>
        <name>Mn(2+)</name>
        <dbReference type="ChEBI" id="CHEBI:29035"/>
        <label>2</label>
    </ligand>
</feature>
<feature type="binding site" evidence="1">
    <location>
        <position position="114"/>
    </location>
    <ligand>
        <name>Mn(2+)</name>
        <dbReference type="ChEBI" id="CHEBI:29035"/>
        <label>2</label>
    </ligand>
</feature>
<feature type="binding site" evidence="1">
    <location>
        <position position="122"/>
    </location>
    <ligand>
        <name>substrate</name>
    </ligand>
</feature>
<feature type="binding site" evidence="1">
    <location>
        <position position="160"/>
    </location>
    <ligand>
        <name>substrate</name>
    </ligand>
</feature>
<feature type="binding site" evidence="1">
    <location>
        <position position="171"/>
    </location>
    <ligand>
        <name>substrate</name>
    </ligand>
</feature>
<feature type="binding site" evidence="1">
    <location>
        <position position="174"/>
    </location>
    <ligand>
        <name>substrate</name>
    </ligand>
</feature>
<feature type="binding site" evidence="1">
    <location>
        <position position="202"/>
    </location>
    <ligand>
        <name>Mn(2+)</name>
        <dbReference type="ChEBI" id="CHEBI:29035"/>
        <label>2</label>
    </ligand>
</feature>
<feature type="binding site" evidence="1">
    <location>
        <position position="202"/>
    </location>
    <ligand>
        <name>substrate</name>
    </ligand>
</feature>
<feature type="binding site" evidence="1">
    <location>
        <position position="204"/>
    </location>
    <ligand>
        <name>Mn(2+)</name>
        <dbReference type="ChEBI" id="CHEBI:29035"/>
        <label>1</label>
    </ligand>
</feature>
<name>LPXH_XANOP</name>
<reference key="1">
    <citation type="journal article" date="2008" name="BMC Genomics">
        <title>Genome sequence and rapid evolution of the rice pathogen Xanthomonas oryzae pv. oryzae PXO99A.</title>
        <authorList>
            <person name="Salzberg S.L."/>
            <person name="Sommer D.D."/>
            <person name="Schatz M.C."/>
            <person name="Phillippy A.M."/>
            <person name="Rabinowicz P.D."/>
            <person name="Tsuge S."/>
            <person name="Furutani A."/>
            <person name="Ochiai H."/>
            <person name="Delcher A.L."/>
            <person name="Kelley D."/>
            <person name="Madupu R."/>
            <person name="Puiu D."/>
            <person name="Radune D."/>
            <person name="Shumway M."/>
            <person name="Trapnell C."/>
            <person name="Aparna G."/>
            <person name="Jha G."/>
            <person name="Pandey A."/>
            <person name="Patil P.B."/>
            <person name="Ishihara H."/>
            <person name="Meyer D.F."/>
            <person name="Szurek B."/>
            <person name="Verdier V."/>
            <person name="Koebnik R."/>
            <person name="Dow J.M."/>
            <person name="Ryan R.P."/>
            <person name="Hirata H."/>
            <person name="Tsuyumu S."/>
            <person name="Won Lee S."/>
            <person name="Seo Y.-S."/>
            <person name="Sriariyanum M."/>
            <person name="Ronald P.C."/>
            <person name="Sonti R.V."/>
            <person name="Van Sluys M.-A."/>
            <person name="Leach J.E."/>
            <person name="White F.F."/>
            <person name="Bogdanove A.J."/>
        </authorList>
    </citation>
    <scope>NUCLEOTIDE SEQUENCE [LARGE SCALE GENOMIC DNA]</scope>
    <source>
        <strain>PXO99A</strain>
    </source>
</reference>
<gene>
    <name evidence="1" type="primary">lpxH</name>
    <name type="ordered locus">PXO_02499</name>
</gene>
<comment type="function">
    <text evidence="1">Hydrolyzes the pyrophosphate bond of UDP-2,3-diacylglucosamine to yield 2,3-diacylglucosamine 1-phosphate (lipid X) and UMP by catalyzing the attack of water at the alpha-P atom. Involved in the biosynthesis of lipid A, a phosphorylated glycolipid that anchors the lipopolysaccharide to the outer membrane of the cell.</text>
</comment>
<comment type="catalytic activity">
    <reaction evidence="1">
        <text>UDP-2-N,3-O-bis[(3R)-3-hydroxytetradecanoyl]-alpha-D-glucosamine + H2O = 2-N,3-O-bis[(3R)-3-hydroxytetradecanoyl]-alpha-D-glucosaminyl 1-phosphate + UMP + 2 H(+)</text>
        <dbReference type="Rhea" id="RHEA:25213"/>
        <dbReference type="ChEBI" id="CHEBI:15377"/>
        <dbReference type="ChEBI" id="CHEBI:15378"/>
        <dbReference type="ChEBI" id="CHEBI:57865"/>
        <dbReference type="ChEBI" id="CHEBI:57957"/>
        <dbReference type="ChEBI" id="CHEBI:78847"/>
        <dbReference type="EC" id="3.6.1.54"/>
    </reaction>
</comment>
<comment type="cofactor">
    <cofactor evidence="1">
        <name>Mn(2+)</name>
        <dbReference type="ChEBI" id="CHEBI:29035"/>
    </cofactor>
    <text evidence="1">Binds 2 Mn(2+) ions per subunit in a binuclear metal center.</text>
</comment>
<comment type="pathway">
    <text evidence="1">Glycolipid biosynthesis; lipid IV(A) biosynthesis; lipid IV(A) from (3R)-3-hydroxytetradecanoyl-[acyl-carrier-protein] and UDP-N-acetyl-alpha-D-glucosamine: step 4/6.</text>
</comment>
<comment type="subcellular location">
    <subcellularLocation>
        <location evidence="1">Cell inner membrane</location>
        <topology evidence="1">Peripheral membrane protein</topology>
        <orientation evidence="1">Cytoplasmic side</orientation>
    </subcellularLocation>
</comment>
<comment type="similarity">
    <text evidence="1">Belongs to the LpxH family.</text>
</comment>
<keyword id="KW-0997">Cell inner membrane</keyword>
<keyword id="KW-1003">Cell membrane</keyword>
<keyword id="KW-0378">Hydrolase</keyword>
<keyword id="KW-0441">Lipid A biosynthesis</keyword>
<keyword id="KW-0444">Lipid biosynthesis</keyword>
<keyword id="KW-0443">Lipid metabolism</keyword>
<keyword id="KW-0464">Manganese</keyword>
<keyword id="KW-0472">Membrane</keyword>
<keyword id="KW-0479">Metal-binding</keyword>
<evidence type="ECO:0000255" key="1">
    <source>
        <dbReference type="HAMAP-Rule" id="MF_00575"/>
    </source>
</evidence>
<dbReference type="EC" id="3.6.1.54" evidence="1"/>
<dbReference type="EMBL" id="CP000967">
    <property type="protein sequence ID" value="ACD60789.1"/>
    <property type="molecule type" value="Genomic_DNA"/>
</dbReference>
<dbReference type="RefSeq" id="WP_011260108.1">
    <property type="nucleotide sequence ID" value="NC_010717.2"/>
</dbReference>
<dbReference type="SMR" id="B2SMK4"/>
<dbReference type="KEGG" id="xop:PXO_02499"/>
<dbReference type="eggNOG" id="COG2908">
    <property type="taxonomic scope" value="Bacteria"/>
</dbReference>
<dbReference type="HOGENOM" id="CLU_074586_0_0_6"/>
<dbReference type="UniPathway" id="UPA00359">
    <property type="reaction ID" value="UER00480"/>
</dbReference>
<dbReference type="Proteomes" id="UP000001740">
    <property type="component" value="Chromosome"/>
</dbReference>
<dbReference type="GO" id="GO:0005737">
    <property type="term" value="C:cytoplasm"/>
    <property type="evidence" value="ECO:0007669"/>
    <property type="project" value="InterPro"/>
</dbReference>
<dbReference type="GO" id="GO:0019897">
    <property type="term" value="C:extrinsic component of plasma membrane"/>
    <property type="evidence" value="ECO:0007669"/>
    <property type="project" value="UniProtKB-UniRule"/>
</dbReference>
<dbReference type="GO" id="GO:0030145">
    <property type="term" value="F:manganese ion binding"/>
    <property type="evidence" value="ECO:0007669"/>
    <property type="project" value="UniProtKB-UniRule"/>
</dbReference>
<dbReference type="GO" id="GO:0008758">
    <property type="term" value="F:UDP-2,3-diacylglucosamine hydrolase activity"/>
    <property type="evidence" value="ECO:0007669"/>
    <property type="project" value="UniProtKB-UniRule"/>
</dbReference>
<dbReference type="GO" id="GO:0009245">
    <property type="term" value="P:lipid A biosynthetic process"/>
    <property type="evidence" value="ECO:0007669"/>
    <property type="project" value="UniProtKB-UniRule"/>
</dbReference>
<dbReference type="CDD" id="cd07398">
    <property type="entry name" value="MPP_YbbF-LpxH"/>
    <property type="match status" value="1"/>
</dbReference>
<dbReference type="Gene3D" id="3.60.21.10">
    <property type="match status" value="1"/>
</dbReference>
<dbReference type="HAMAP" id="MF_00575">
    <property type="entry name" value="LpxH"/>
    <property type="match status" value="1"/>
</dbReference>
<dbReference type="InterPro" id="IPR004843">
    <property type="entry name" value="Calcineurin-like_PHP_ApaH"/>
</dbReference>
<dbReference type="InterPro" id="IPR043461">
    <property type="entry name" value="LpxH-like"/>
</dbReference>
<dbReference type="InterPro" id="IPR029052">
    <property type="entry name" value="Metallo-depent_PP-like"/>
</dbReference>
<dbReference type="InterPro" id="IPR010138">
    <property type="entry name" value="UDP-diacylglucosamine_Hdrlase"/>
</dbReference>
<dbReference type="NCBIfam" id="TIGR01854">
    <property type="entry name" value="lipid_A_lpxH"/>
    <property type="match status" value="1"/>
</dbReference>
<dbReference type="NCBIfam" id="NF003743">
    <property type="entry name" value="PRK05340.1"/>
    <property type="match status" value="1"/>
</dbReference>
<dbReference type="PANTHER" id="PTHR34990:SF1">
    <property type="entry name" value="UDP-2,3-DIACYLGLUCOSAMINE HYDROLASE"/>
    <property type="match status" value="1"/>
</dbReference>
<dbReference type="PANTHER" id="PTHR34990">
    <property type="entry name" value="UDP-2,3-DIACYLGLUCOSAMINE HYDROLASE-RELATED"/>
    <property type="match status" value="1"/>
</dbReference>
<dbReference type="Pfam" id="PF00149">
    <property type="entry name" value="Metallophos"/>
    <property type="match status" value="1"/>
</dbReference>
<dbReference type="SUPFAM" id="SSF56300">
    <property type="entry name" value="Metallo-dependent phosphatases"/>
    <property type="match status" value="1"/>
</dbReference>
<protein>
    <recommendedName>
        <fullName evidence="1">UDP-2,3-diacylglucosamine hydrolase</fullName>
        <ecNumber evidence="1">3.6.1.54</ecNumber>
    </recommendedName>
    <alternativeName>
        <fullName evidence="1">UDP-2,3-diacylglucosamine diphosphatase</fullName>
    </alternativeName>
</protein>
<proteinExistence type="inferred from homology"/>